<name>CPAP_MOUSE</name>
<organism>
    <name type="scientific">Mus musculus</name>
    <name type="common">Mouse</name>
    <dbReference type="NCBI Taxonomy" id="10090"/>
    <lineage>
        <taxon>Eukaryota</taxon>
        <taxon>Metazoa</taxon>
        <taxon>Chordata</taxon>
        <taxon>Craniata</taxon>
        <taxon>Vertebrata</taxon>
        <taxon>Euteleostomi</taxon>
        <taxon>Mammalia</taxon>
        <taxon>Eutheria</taxon>
        <taxon>Euarchontoglires</taxon>
        <taxon>Glires</taxon>
        <taxon>Rodentia</taxon>
        <taxon>Myomorpha</taxon>
        <taxon>Muroidea</taxon>
        <taxon>Muridae</taxon>
        <taxon>Murinae</taxon>
        <taxon>Mus</taxon>
        <taxon>Mus</taxon>
    </lineage>
</organism>
<protein>
    <recommendedName>
        <fullName evidence="1">Centrosomal P4.1-associated protein</fullName>
    </recommendedName>
    <alternativeName>
        <fullName>Centromere protein J</fullName>
        <shortName>CENP-J</shortName>
    </alternativeName>
    <alternativeName>
        <fullName>Centrosome assembly and centriole elongation protein</fullName>
    </alternativeName>
</protein>
<dbReference type="EMBL" id="AC154837">
    <property type="status" value="NOT_ANNOTATED_CDS"/>
    <property type="molecule type" value="Genomic_DNA"/>
</dbReference>
<dbReference type="EMBL" id="BC092399">
    <property type="protein sequence ID" value="AAH92399.1"/>
    <property type="molecule type" value="mRNA"/>
</dbReference>
<dbReference type="CCDS" id="CCDS27150.1"/>
<dbReference type="RefSeq" id="NP_001014996.2">
    <property type="nucleotide sequence ID" value="NM_001014996.3"/>
</dbReference>
<dbReference type="SMR" id="Q569L8"/>
<dbReference type="BioGRID" id="230108">
    <property type="interactions" value="7"/>
</dbReference>
<dbReference type="ComplexPortal" id="CPX-1297">
    <property type="entry name" value="CPAP-STIL complex"/>
</dbReference>
<dbReference type="FunCoup" id="Q569L8">
    <property type="interactions" value="1425"/>
</dbReference>
<dbReference type="IntAct" id="Q569L8">
    <property type="interactions" value="1"/>
</dbReference>
<dbReference type="STRING" id="10090.ENSMUSP00000153013"/>
<dbReference type="iPTMnet" id="Q569L8"/>
<dbReference type="PhosphoSitePlus" id="Q569L8"/>
<dbReference type="jPOST" id="Q569L8"/>
<dbReference type="PaxDb" id="10090-ENSMUSP00000065949"/>
<dbReference type="PeptideAtlas" id="Q569L8"/>
<dbReference type="ProteomicsDB" id="283881"/>
<dbReference type="Antibodypedia" id="22520">
    <property type="antibodies" value="202 antibodies from 26 providers"/>
</dbReference>
<dbReference type="DNASU" id="219103"/>
<dbReference type="Ensembl" id="ENSMUST00000065302.8">
    <property type="protein sequence ID" value="ENSMUSP00000065949.8"/>
    <property type="gene ID" value="ENSMUSG00000064128.9"/>
</dbReference>
<dbReference type="Ensembl" id="ENSMUST00000225951.2">
    <property type="protein sequence ID" value="ENSMUSP00000153013.2"/>
    <property type="gene ID" value="ENSMUSG00000064128.9"/>
</dbReference>
<dbReference type="GeneID" id="219103"/>
<dbReference type="KEGG" id="mmu:219103"/>
<dbReference type="UCSC" id="uc007ucb.2">
    <property type="organism name" value="mouse"/>
</dbReference>
<dbReference type="AGR" id="MGI:2684927"/>
<dbReference type="CTD" id="55835"/>
<dbReference type="MGI" id="MGI:2684927">
    <property type="gene designation" value="Cenpj"/>
</dbReference>
<dbReference type="VEuPathDB" id="HostDB:ENSMUSG00000064128"/>
<dbReference type="eggNOG" id="ENOG502QQR0">
    <property type="taxonomic scope" value="Eukaryota"/>
</dbReference>
<dbReference type="GeneTree" id="ENSGT00530000063927"/>
<dbReference type="HOGENOM" id="CLU_008072_0_0_1"/>
<dbReference type="InParanoid" id="Q569L8"/>
<dbReference type="OMA" id="EENSCKH"/>
<dbReference type="OrthoDB" id="10252174at2759"/>
<dbReference type="PhylomeDB" id="Q569L8"/>
<dbReference type="TreeFam" id="TF343156"/>
<dbReference type="Reactome" id="R-MMU-2565942">
    <property type="pathway name" value="Regulation of PLK1 Activity at G2/M Transition"/>
</dbReference>
<dbReference type="Reactome" id="R-MMU-380259">
    <property type="pathway name" value="Loss of Nlp from mitotic centrosomes"/>
</dbReference>
<dbReference type="Reactome" id="R-MMU-380270">
    <property type="pathway name" value="Recruitment of mitotic centrosome proteins and complexes"/>
</dbReference>
<dbReference type="Reactome" id="R-MMU-380284">
    <property type="pathway name" value="Loss of proteins required for interphase microtubule organization from the centrosome"/>
</dbReference>
<dbReference type="Reactome" id="R-MMU-380320">
    <property type="pathway name" value="Recruitment of NuMA to mitotic centrosomes"/>
</dbReference>
<dbReference type="Reactome" id="R-MMU-5620912">
    <property type="pathway name" value="Anchoring of the basal body to the plasma membrane"/>
</dbReference>
<dbReference type="Reactome" id="R-MMU-6804115">
    <property type="pathway name" value="TP53 regulates transcription of additional cell cycle genes whose exact role in the p53 pathway remain uncertain"/>
</dbReference>
<dbReference type="Reactome" id="R-MMU-8854518">
    <property type="pathway name" value="AURKA Activation by TPX2"/>
</dbReference>
<dbReference type="BioGRID-ORCS" id="219103">
    <property type="hits" value="5 hits in 77 CRISPR screens"/>
</dbReference>
<dbReference type="ChiTaRS" id="Cenpj">
    <property type="organism name" value="mouse"/>
</dbReference>
<dbReference type="PRO" id="PR:Q569L8"/>
<dbReference type="Proteomes" id="UP000000589">
    <property type="component" value="Chromosome 14"/>
</dbReference>
<dbReference type="RNAct" id="Q569L8">
    <property type="molecule type" value="protein"/>
</dbReference>
<dbReference type="Bgee" id="ENSMUSG00000064128">
    <property type="expression patterns" value="Expressed in secondary oocyte and 204 other cell types or tissues"/>
</dbReference>
<dbReference type="ExpressionAtlas" id="Q569L8">
    <property type="expression patterns" value="baseline and differential"/>
</dbReference>
<dbReference type="GO" id="GO:0005814">
    <property type="term" value="C:centriole"/>
    <property type="evidence" value="ECO:0000314"/>
    <property type="project" value="MGI"/>
</dbReference>
<dbReference type="GO" id="GO:0005813">
    <property type="term" value="C:centrosome"/>
    <property type="evidence" value="ECO:0000266"/>
    <property type="project" value="MGI"/>
</dbReference>
<dbReference type="GO" id="GO:0036064">
    <property type="term" value="C:ciliary basal body"/>
    <property type="evidence" value="ECO:0000314"/>
    <property type="project" value="MGI"/>
</dbReference>
<dbReference type="GO" id="GO:0005737">
    <property type="term" value="C:cytoplasm"/>
    <property type="evidence" value="ECO:0000266"/>
    <property type="project" value="MGI"/>
</dbReference>
<dbReference type="GO" id="GO:0005874">
    <property type="term" value="C:microtubule"/>
    <property type="evidence" value="ECO:0007669"/>
    <property type="project" value="UniProtKB-KW"/>
</dbReference>
<dbReference type="GO" id="GO:0120099">
    <property type="term" value="C:procentriole replication complex"/>
    <property type="evidence" value="ECO:0000266"/>
    <property type="project" value="ComplexPortal"/>
</dbReference>
<dbReference type="GO" id="GO:0043015">
    <property type="term" value="F:gamma-tubulin binding"/>
    <property type="evidence" value="ECO:0000266"/>
    <property type="project" value="MGI"/>
</dbReference>
<dbReference type="GO" id="GO:0042802">
    <property type="term" value="F:identical protein binding"/>
    <property type="evidence" value="ECO:0007669"/>
    <property type="project" value="Ensembl"/>
</dbReference>
<dbReference type="GO" id="GO:0019904">
    <property type="term" value="F:protein domain specific binding"/>
    <property type="evidence" value="ECO:0007669"/>
    <property type="project" value="Ensembl"/>
</dbReference>
<dbReference type="GO" id="GO:0019901">
    <property type="term" value="F:protein kinase binding"/>
    <property type="evidence" value="ECO:0007669"/>
    <property type="project" value="Ensembl"/>
</dbReference>
<dbReference type="GO" id="GO:0003713">
    <property type="term" value="F:transcription coactivator activity"/>
    <property type="evidence" value="ECO:0000266"/>
    <property type="project" value="MGI"/>
</dbReference>
<dbReference type="GO" id="GO:0030954">
    <property type="term" value="P:astral microtubule nucleation"/>
    <property type="evidence" value="ECO:0000266"/>
    <property type="project" value="MGI"/>
</dbReference>
<dbReference type="GO" id="GO:0098534">
    <property type="term" value="P:centriole assembly"/>
    <property type="evidence" value="ECO:0000315"/>
    <property type="project" value="MGI"/>
</dbReference>
<dbReference type="GO" id="GO:0061511">
    <property type="term" value="P:centriole elongation"/>
    <property type="evidence" value="ECO:0000250"/>
    <property type="project" value="UniProtKB"/>
</dbReference>
<dbReference type="GO" id="GO:0007099">
    <property type="term" value="P:centriole replication"/>
    <property type="evidence" value="ECO:0000315"/>
    <property type="project" value="MGI"/>
</dbReference>
<dbReference type="GO" id="GO:0051298">
    <property type="term" value="P:centrosome duplication"/>
    <property type="evidence" value="ECO:0000315"/>
    <property type="project" value="MGI"/>
</dbReference>
<dbReference type="GO" id="GO:0044458">
    <property type="term" value="P:motile cilium assembly"/>
    <property type="evidence" value="ECO:0000315"/>
    <property type="project" value="MGI"/>
</dbReference>
<dbReference type="GO" id="GO:1905515">
    <property type="term" value="P:non-motile cilium assembly"/>
    <property type="evidence" value="ECO:0000315"/>
    <property type="project" value="MGI"/>
</dbReference>
<dbReference type="GO" id="GO:1903724">
    <property type="term" value="P:positive regulation of centriole elongation"/>
    <property type="evidence" value="ECO:0000250"/>
    <property type="project" value="UniProtKB"/>
</dbReference>
<dbReference type="GO" id="GO:0046601">
    <property type="term" value="P:positive regulation of centriole replication"/>
    <property type="evidence" value="ECO:0000266"/>
    <property type="project" value="ComplexPortal"/>
</dbReference>
<dbReference type="GO" id="GO:1904951">
    <property type="term" value="P:positive regulation of establishment of protein localization"/>
    <property type="evidence" value="ECO:0000250"/>
    <property type="project" value="UniProtKB"/>
</dbReference>
<dbReference type="GO" id="GO:1900087">
    <property type="term" value="P:positive regulation of G1/S transition of mitotic cell cycle"/>
    <property type="evidence" value="ECO:0000266"/>
    <property type="project" value="ComplexPortal"/>
</dbReference>
<dbReference type="GO" id="GO:1902857">
    <property type="term" value="P:positive regulation of non-motile cilium assembly"/>
    <property type="evidence" value="ECO:0000315"/>
    <property type="project" value="MGI"/>
</dbReference>
<dbReference type="GO" id="GO:0046427">
    <property type="term" value="P:positive regulation of receptor signaling pathway via JAK-STAT"/>
    <property type="evidence" value="ECO:0000266"/>
    <property type="project" value="MGI"/>
</dbReference>
<dbReference type="GO" id="GO:1905832">
    <property type="term" value="P:positive regulation of spindle assembly"/>
    <property type="evidence" value="ECO:0000303"/>
    <property type="project" value="ComplexPortal"/>
</dbReference>
<dbReference type="GO" id="GO:0046599">
    <property type="term" value="P:regulation of centriole replication"/>
    <property type="evidence" value="ECO:0000250"/>
    <property type="project" value="UniProtKB"/>
</dbReference>
<dbReference type="GO" id="GO:0060236">
    <property type="term" value="P:regulation of mitotic spindle organization"/>
    <property type="evidence" value="ECO:0000303"/>
    <property type="project" value="ComplexPortal"/>
</dbReference>
<dbReference type="GO" id="GO:0007224">
    <property type="term" value="P:smoothened signaling pathway"/>
    <property type="evidence" value="ECO:0000315"/>
    <property type="project" value="MGI"/>
</dbReference>
<dbReference type="FunFam" id="2.60.450.20:FF:000001">
    <property type="entry name" value="Centromere protein J"/>
    <property type="match status" value="1"/>
</dbReference>
<dbReference type="Gene3D" id="2.60.450.20">
    <property type="match status" value="1"/>
</dbReference>
<dbReference type="InterPro" id="IPR009852">
    <property type="entry name" value="CENPJ_C_dom"/>
</dbReference>
<dbReference type="InterPro" id="IPR047002">
    <property type="entry name" value="Tcp10_C_sf"/>
</dbReference>
<dbReference type="InterPro" id="IPR026581">
    <property type="entry name" value="TCP10L/CENPJ"/>
</dbReference>
<dbReference type="PANTHER" id="PTHR10331:SF23">
    <property type="entry name" value="CENTROMERE PROTEIN J"/>
    <property type="match status" value="1"/>
</dbReference>
<dbReference type="PANTHER" id="PTHR10331">
    <property type="entry name" value="T COMPLEX PROTEIN 10"/>
    <property type="match status" value="1"/>
</dbReference>
<dbReference type="Pfam" id="PF07202">
    <property type="entry name" value="Tcp10_C"/>
    <property type="match status" value="4"/>
</dbReference>
<comment type="function">
    <text evidence="1">Plays an important role in cell division and centrosome function by participating in centriole duplication. Inhibits microtubule nucleation from the centrosome. Involved in the regulation of slow processive growth of centriolar microtubules. Acts as microtubule plus-end tracking protein that stabilizes centriolar microtubules and inhibits microtubule polymerization and extension from the distal ends of centrioles. Required for centriole elongation and for STIL-mediated centriole amplification. Required for the recruitment of CEP295 to the proximal end of new-born centrioles at the centriolar microtubule wall during early S phase in a PLK4-dependent manner. May be involved in the control of centriolar-microtubule growth by acting as a regulator of tubulin release (By similarity).</text>
</comment>
<comment type="subunit">
    <text evidence="1">Forms homodimers. Associates with microtubules plus ends; binds to beta-tubulin subunits exposed on microtubule outer surface at its distal tip; also associates with microtubule lattice. Associated with the gamma-tubulin complex. Interacts with the head domain of EPB41. Interacts with LYST. Interacts with CEP152 (via C-terminus). Interacts with STIL. Forms a complex with STIL and SASS6 (By similarity).</text>
</comment>
<comment type="subcellular location">
    <subcellularLocation>
        <location evidence="1">Cytoplasm</location>
        <location evidence="1">Cytoskeleton</location>
        <location evidence="1">Microtubule organizing center</location>
        <location evidence="1">Centrosome</location>
    </subcellularLocation>
    <subcellularLocation>
        <location evidence="1">Cytoplasm</location>
        <location evidence="1">Cytoskeleton</location>
        <location evidence="1">Microtubule organizing center</location>
        <location evidence="1">Centrosome</location>
        <location evidence="1">Centriole</location>
    </subcellularLocation>
    <text evidence="1">Localized within the center of microtubule asters. During centriole biogenesis, it is concentrated within the proximal lumen of both parental centrioles and procentrioles (By similarity).</text>
</comment>
<comment type="PTM">
    <text evidence="1">Phosphorylation at Ser-577 and Ser-583 by PLK2 is required for procentriole formation and centriole elongation. Phosphorylation by PLK2 oscillates during the cell cycle: it increases at G1/S transition and decreases during the exit from mitosis. Phosphorylation at Ser-583 is also mediated by PLK4 but is not a critical step in PLK4 function in procentriole assembly.</text>
</comment>
<comment type="similarity">
    <text evidence="3">Belongs to the TCP10 family.</text>
</comment>
<proteinExistence type="evidence at transcript level"/>
<accession>Q569L8</accession>
<accession>E9QLP3</accession>
<gene>
    <name type="primary">Cpap</name>
    <name evidence="4" type="synonym">Cenpj</name>
</gene>
<keyword id="KW-0963">Cytoplasm</keyword>
<keyword id="KW-0206">Cytoskeleton</keyword>
<keyword id="KW-0493">Microtubule</keyword>
<keyword id="KW-0597">Phosphoprotein</keyword>
<keyword id="KW-1185">Reference proteome</keyword>
<evidence type="ECO:0000250" key="1">
    <source>
        <dbReference type="UniProtKB" id="Q9HC77"/>
    </source>
</evidence>
<evidence type="ECO:0000256" key="2">
    <source>
        <dbReference type="SAM" id="MobiDB-lite"/>
    </source>
</evidence>
<evidence type="ECO:0000305" key="3"/>
<evidence type="ECO:0000312" key="4">
    <source>
        <dbReference type="MGI" id="MGI:2684927"/>
    </source>
</evidence>
<sequence length="1344" mass="153079">MFLMPTSSELNSGQNFLTQWMTSPSRAGVILNRGFPILEADDKQAATNVSTSFPAKATHFSNSFSISSEEDSFHEEQKLEAGGPYKPWSENPEAPPVFPSVRKEPIASRQDAPGCQEDNNNDLTPHLESEFKEVANKNPLFKKLEQLKEIQQKKQEQLKRQQLEQLQRLMEEQEKLLTMVSAQHAFPGTLLPDDQSQKHRSPGDLTLPPHSYSNPTQENSCASNVLPDEQSNFCRATQDSVLTSKNASDLFYESQYQEAHVKRNDLKEESPAHPSGEGALPRWEKKMGRSQEGKDVNLQKCGDSSEVVNIDERPIKAAVREKQQTFEDYLEEQIQLEERELRQKQLQEAEGPLLAKTKPKQPFLKRGEGLARFTNAKSKFQKGKESKLASTQSPSEDQPGSKVDRQHLQRKTALINKDLCAETPTVKKDSKARPKAGFASLRQKPKVTKTNMRESLSPPGLKVQTGKKRDGQFRHQVKGERNAHASNKENVPACIKPWDAGCKMWSKTQGRERLPLSTGPVGCVVSRSPIRETDRETESSLDFSLQKKLEIWEREKEKENLELDEFLFLERAADEISFSSNSSFVLRILERDQQICDGHRLSSTPVKAVQQREAQQADPRGQSNCSEIPRYGVAHENESECEAMLLSWGSGSPDGLRELSCKRSMKAFQTSTSEIQSQWDARDDGVANSDSSTESEEQHDITIKPSTEVGDRVFSNREDSPQVCDAKGPIRDTGAQEDKWRDADLDLSDKECSSDESVIVESLNNKVLEPLRLPSSQAGSKIDFDDERSWTDLEENPYEHGVIHREEAIYGTPQTQCHSKSEGCVLDKTIKRKIAPVKKGEDFKCDRRISPPPPSDLMVKFFPSLKPKPKLDSHLENESKLNLSQDQPPEFMVCFIGDSVRSQVLREKVTELESEIEKFKAENTSLAKLRIERESALEKLRKEIADFEQQKARELARIEEYRKEETRKLQKERKVFEKYTAAARTFPDKKEREEIQALKQQIADLQEDLKRKETKWSSTQSRLRSQIEMLVKENTDLREEIKVMERFRLDAWKRAEAMENSPKACQYMMATKKDESMNSSFQFQKSHVSSGVQVEKYKKKYLPAQGNLSRRIKSAPPRDLGSSDKGQAALPREPLQQVNFPDLEYKNKEEKEEEIQGEISHPDGKVEKIYKNGRRVVLFPNGTRKEVSADGKSVTVTFFNGDVKQVMPDERVVYYYAAAQTTHTTYPEGLEVLHFSSGQIEKHFPDGRKEITFPDQTIKTLFADGQEESIFPDGTIVRVQRDGNKIIEFNNGQRELHTAQFKRREYPDGTVKTVYANGHQETKYTSGRVRVKDKDGNVLMDTEM</sequence>
<reference key="1">
    <citation type="journal article" date="2009" name="PLoS Biol.">
        <title>Lineage-specific biology revealed by a finished genome assembly of the mouse.</title>
        <authorList>
            <person name="Church D.M."/>
            <person name="Goodstadt L."/>
            <person name="Hillier L.W."/>
            <person name="Zody M.C."/>
            <person name="Goldstein S."/>
            <person name="She X."/>
            <person name="Bult C.J."/>
            <person name="Agarwala R."/>
            <person name="Cherry J.L."/>
            <person name="DiCuccio M."/>
            <person name="Hlavina W."/>
            <person name="Kapustin Y."/>
            <person name="Meric P."/>
            <person name="Maglott D."/>
            <person name="Birtle Z."/>
            <person name="Marques A.C."/>
            <person name="Graves T."/>
            <person name="Zhou S."/>
            <person name="Teague B."/>
            <person name="Potamousis K."/>
            <person name="Churas C."/>
            <person name="Place M."/>
            <person name="Herschleb J."/>
            <person name="Runnheim R."/>
            <person name="Forrest D."/>
            <person name="Amos-Landgraf J."/>
            <person name="Schwartz D.C."/>
            <person name="Cheng Z."/>
            <person name="Lindblad-Toh K."/>
            <person name="Eichler E.E."/>
            <person name="Ponting C.P."/>
        </authorList>
    </citation>
    <scope>NUCLEOTIDE SEQUENCE [LARGE SCALE GENOMIC DNA]</scope>
    <source>
        <strain>C57BL/6J</strain>
    </source>
</reference>
<reference key="2">
    <citation type="journal article" date="2004" name="Genome Res.">
        <title>The status, quality, and expansion of the NIH full-length cDNA project: the Mammalian Gene Collection (MGC).</title>
        <authorList>
            <consortium name="The MGC Project Team"/>
        </authorList>
    </citation>
    <scope>NUCLEOTIDE SEQUENCE [LARGE SCALE MRNA]</scope>
    <source>
        <strain>C57BL/6J</strain>
        <tissue>Eye</tissue>
    </source>
</reference>
<feature type="chain" id="PRO_0000286053" description="Centrosomal P4.1-associated protein">
    <location>
        <begin position="1"/>
        <end position="1344"/>
    </location>
</feature>
<feature type="region of interest" description="Disordered" evidence="2">
    <location>
        <begin position="67"/>
        <end position="123"/>
    </location>
</feature>
<feature type="region of interest" description="Disordered" evidence="2">
    <location>
        <begin position="187"/>
        <end position="225"/>
    </location>
</feature>
<feature type="region of interest" description="Disordered" evidence="2">
    <location>
        <begin position="257"/>
        <end position="300"/>
    </location>
</feature>
<feature type="region of interest" description="Alpha/beta-tubulin binding" evidence="1">
    <location>
        <begin position="307"/>
        <end position="382"/>
    </location>
</feature>
<feature type="region of interest" description="Disordered" evidence="2">
    <location>
        <begin position="347"/>
        <end position="407"/>
    </location>
</feature>
<feature type="region of interest" description="Disordered" evidence="2">
    <location>
        <begin position="425"/>
        <end position="470"/>
    </location>
</feature>
<feature type="region of interest" description="Disordered" evidence="2">
    <location>
        <begin position="600"/>
        <end position="626"/>
    </location>
</feature>
<feature type="region of interest" description="Disordered" evidence="2">
    <location>
        <begin position="672"/>
        <end position="735"/>
    </location>
</feature>
<feature type="region of interest" description="Interaction with STIL" evidence="1">
    <location>
        <begin position="887"/>
        <end position="1344"/>
    </location>
</feature>
<feature type="region of interest" description="Disordered" evidence="2">
    <location>
        <begin position="1105"/>
        <end position="1133"/>
    </location>
</feature>
<feature type="compositionally biased region" description="Polar residues" evidence="2">
    <location>
        <begin position="211"/>
        <end position="225"/>
    </location>
</feature>
<feature type="compositionally biased region" description="Basic and acidic residues" evidence="2">
    <location>
        <begin position="259"/>
        <end position="271"/>
    </location>
</feature>
<feature type="compositionally biased region" description="Basic and acidic residues" evidence="2">
    <location>
        <begin position="282"/>
        <end position="297"/>
    </location>
</feature>
<feature type="compositionally biased region" description="Polar residues" evidence="2">
    <location>
        <begin position="388"/>
        <end position="398"/>
    </location>
</feature>
<feature type="compositionally biased region" description="Basic and acidic residues" evidence="2">
    <location>
        <begin position="709"/>
        <end position="720"/>
    </location>
</feature>
<feature type="modified residue" description="Phosphoserine" evidence="1">
    <location>
        <position position="248"/>
    </location>
</feature>
<feature type="modified residue" description="Phosphoserine" evidence="1">
    <location>
        <position position="304"/>
    </location>
</feature>
<feature type="modified residue" description="Phosphoserine" evidence="1">
    <location>
        <position position="528"/>
    </location>
</feature>
<feature type="modified residue" description="Phosphoserine; by PLK2" evidence="1">
    <location>
        <position position="577"/>
    </location>
</feature>
<feature type="modified residue" description="Phosphoserine; by PLK2" evidence="1">
    <location>
        <position position="583"/>
    </location>
</feature>
<feature type="modified residue" description="Phosphoserine" evidence="1">
    <location>
        <position position="748"/>
    </location>
</feature>
<feature type="sequence conflict" description="In Ref. 2; AAH92399." evidence="3" ref="2">
    <original>N</original>
    <variation>S</variation>
    <location>
        <position position="716"/>
    </location>
</feature>